<gene>
    <name evidence="9" type="ordered locus">Saci_1500</name>
</gene>
<protein>
    <recommendedName>
        <fullName>ATP-dependent helicase Lhr-Core</fullName>
        <ecNumber evidence="5">5.6.2.4</ecNumber>
    </recommendedName>
    <alternativeName>
        <fullName evidence="7">DNA 3'-5' helicase Lhr-Core</fullName>
    </alternativeName>
    <alternativeName>
        <fullName evidence="6">DNA 3'-5' helicase Saci_1500</fullName>
    </alternativeName>
</protein>
<evidence type="ECO:0000250" key="1">
    <source>
        <dbReference type="UniProtKB" id="A0QT91"/>
    </source>
</evidence>
<evidence type="ECO:0000250" key="2">
    <source>
        <dbReference type="UniProtKB" id="F0LJX3"/>
    </source>
</evidence>
<evidence type="ECO:0000255" key="3">
    <source>
        <dbReference type="PROSITE-ProRule" id="PRU00541"/>
    </source>
</evidence>
<evidence type="ECO:0000255" key="4">
    <source>
        <dbReference type="PROSITE-ProRule" id="PRU00542"/>
    </source>
</evidence>
<evidence type="ECO:0000269" key="5">
    <source>
    </source>
</evidence>
<evidence type="ECO:0000303" key="6">
    <source>
    </source>
</evidence>
<evidence type="ECO:0000305" key="7"/>
<evidence type="ECO:0000305" key="8">
    <source>
    </source>
</evidence>
<evidence type="ECO:0000312" key="9">
    <source>
        <dbReference type="EMBL" id="AAY80821.1"/>
    </source>
</evidence>
<accession>Q4J8R1</accession>
<feature type="chain" id="PRO_0000462454" description="ATP-dependent helicase Lhr-Core">
    <location>
        <begin position="1"/>
        <end position="876"/>
    </location>
</feature>
<feature type="domain" description="Helicase ATP-binding" evidence="3">
    <location>
        <begin position="41"/>
        <end position="232"/>
    </location>
</feature>
<feature type="domain" description="Helicase C-terminal" evidence="4">
    <location>
        <begin position="249"/>
        <end position="421"/>
    </location>
</feature>
<feature type="region of interest" description="WH domain" evidence="1">
    <location>
        <begin position="422"/>
        <end position="506"/>
    </location>
</feature>
<feature type="region of interest" description="Domain 4" evidence="1">
    <location>
        <begin position="507"/>
        <end position="876"/>
    </location>
</feature>
<feature type="short sequence motif" description="DEAH box" evidence="3">
    <location>
        <begin position="175"/>
        <end position="178"/>
    </location>
</feature>
<feature type="binding site" evidence="1">
    <location>
        <position position="37"/>
    </location>
    <ligand>
        <name>ATP</name>
        <dbReference type="ChEBI" id="CHEBI:30616"/>
    </ligand>
</feature>
<feature type="binding site" evidence="1">
    <location>
        <position position="60"/>
    </location>
    <ligand>
        <name>ATP</name>
        <dbReference type="ChEBI" id="CHEBI:30616"/>
    </ligand>
</feature>
<feature type="binding site" evidence="1">
    <location>
        <position position="61"/>
    </location>
    <ligand>
        <name>ATP</name>
        <dbReference type="ChEBI" id="CHEBI:30616"/>
    </ligand>
</feature>
<feature type="binding site" evidence="1">
    <location>
        <position position="175"/>
    </location>
    <ligand>
        <name>ATP</name>
        <dbReference type="ChEBI" id="CHEBI:30616"/>
    </ligand>
</feature>
<feature type="binding site" evidence="1">
    <location>
        <position position="176"/>
    </location>
    <ligand>
        <name>ATP</name>
        <dbReference type="ChEBI" id="CHEBI:30616"/>
    </ligand>
</feature>
<feature type="binding site" evidence="1">
    <location>
        <position position="374"/>
    </location>
    <ligand>
        <name>ATP</name>
        <dbReference type="ChEBI" id="CHEBI:30616"/>
    </ligand>
</feature>
<feature type="binding site" evidence="1">
    <location>
        <position position="377"/>
    </location>
    <ligand>
        <name>ATP</name>
        <dbReference type="ChEBI" id="CHEBI:30616"/>
    </ligand>
</feature>
<feature type="site" description="Wedges between bases of the loading strand" evidence="1">
    <location>
        <position position="505"/>
    </location>
</feature>
<feature type="mutagenesis site" description="Loss of helicase activity, does not complement UV sensitivity of a deletion strain." evidence="5">
    <original>K</original>
    <variation>A</variation>
    <location>
        <position position="60"/>
    </location>
</feature>
<organism>
    <name type="scientific">Sulfolobus acidocaldarius (strain ATCC 33909 / DSM 639 / JCM 8929 / NBRC 15157 / NCIMB 11770)</name>
    <dbReference type="NCBI Taxonomy" id="330779"/>
    <lineage>
        <taxon>Archaea</taxon>
        <taxon>Thermoproteota</taxon>
        <taxon>Thermoprotei</taxon>
        <taxon>Sulfolobales</taxon>
        <taxon>Sulfolobaceae</taxon>
        <taxon>Sulfolobus</taxon>
    </lineage>
</organism>
<keyword id="KW-0067">ATP-binding</keyword>
<keyword id="KW-0227">DNA damage</keyword>
<keyword id="KW-0234">DNA repair</keyword>
<keyword id="KW-0238">DNA-binding</keyword>
<keyword id="KW-0347">Helicase</keyword>
<keyword id="KW-0378">Hydrolase</keyword>
<keyword id="KW-0413">Isomerase</keyword>
<keyword id="KW-0547">Nucleotide-binding</keyword>
<keyword id="KW-1185">Reference proteome</keyword>
<sequence>MDINTLLNTPDEDVLSLFTPQVARWFKEKYKVFTPPQKGAIPLIKKGKNVLVSSPTGSGKTLAAFLGILDTLIDLGYKNELNKQIYAIYISPLRALNNDMRRNLIEPLTELRNLYPDLPEISIGVRTSDTSSYEKQKMLKKPPHILITTPESFGISLVSPKFREKLSDVKWVIVDEIHELANSKRGAYLAGLLELYKSFIAKNNFVRIGLSATISPLEEVAKFLVGGNGDYEIIDARFVKPTDIQVVSPVKDLVHATEEEVNIGIYSYLVDEIKKHKTTLIFTNTRHAAERVAYKLRKMFEDQNIFDSDLVAAHHSSLSRDVRLEVEEKLKRGELKVVVSSTSLELGIDIGYIDLVTLLSSPKSVSRLLQRVGRAGHHIREVSKGRVVVVDRDDLVECTVLAKLAIDRKIDNIHVPENPLDVLTQLIVAASLITPIEKDKLYEIIKNVYNFRSLSYDEYNNVAEYLAGNYGLDSNKVYAKIRIKDGMISPKRGTRMIFFLNSGTIPDEAMIPVKMENGGYVGNLEEEFVEILAPGDIFVLAGKTYEFIRSEGNSVIVKKSEGQRPTVPSWFSEMLPLAFDSAIEIGKFRGKIAEAIMNEVPKDEVISSIMSEYNLSRFAALSIYNYVKEELLFTGGIVPTDKLLLIEVYDDDDQNRNFIFHGLYGRRTVDALSRAIAYIISKDLNMDVRIAITDNGFAITVPGKQEYEISKVFDKLEPDKMYEILSDVILRTEMIKRRFRHCAERSFMLLKRYKGRETSIDRRQINSEVLLGVVRQIEHFPVLKETVREILEDYMDIKRAIEIVEKIRNGDIKVATIGPNQVPSPFAHNILVKQYTDVVLAEDKRELLKELHNKVIEFLRNKGIDIDLEYTEAGIK</sequence>
<comment type="function">
    <text evidence="5 8">Probably part of a 4-gene DNA damage response locus in which the upstream ups system, in combination with this downstream locus, functions in homologous recombination to rescue Sulfolobales from DNA-damaging threats (Probable) (PubMed:26148716). DNA helicase that translocates in a 3'-5' direction on single-stranded (ss)DNA (PubMed:26148716). Binds Holliday junction (HJ) DNA, Y-shaped DNA, DNA with a 3'-overhang and single-stranded (ss)DNA with high affinity; binds double-stranded (ds)DNA with less affinity. Has helicase activity on DNA with a 3'-overhang, Y-shaped DNA and HJ DNA. Does not unwind blunt-ended dsDNA or DNA with a 5'-overhang.</text>
</comment>
<comment type="catalytic activity">
    <reaction evidence="5">
        <text>Couples ATP hydrolysis with the unwinding of duplex DNA by translocating in the 3'-5' direction.</text>
        <dbReference type="EC" id="5.6.2.4"/>
    </reaction>
</comment>
<comment type="catalytic activity">
    <reaction evidence="8">
        <text>ATP + H2O = ADP + phosphate + H(+)</text>
        <dbReference type="Rhea" id="RHEA:13065"/>
        <dbReference type="ChEBI" id="CHEBI:15377"/>
        <dbReference type="ChEBI" id="CHEBI:15378"/>
        <dbReference type="ChEBI" id="CHEBI:30616"/>
        <dbReference type="ChEBI" id="CHEBI:43474"/>
        <dbReference type="ChEBI" id="CHEBI:456216"/>
        <dbReference type="EC" id="5.6.2.4"/>
    </reaction>
</comment>
<comment type="subunit">
    <text evidence="2">Monomer.</text>
</comment>
<comment type="domain">
    <text evidence="1">Composed of 2 helicase domains, a winged-helix (WH) domain, and Lhr-specific domain 4.</text>
</comment>
<comment type="disruption phenotype">
    <text evidence="5">No visible growth phenotype, signficantly reduced survival after UV treatment. No change in sensitivity to methanesulfonate or hydroxyurea. Slightly further reduced survival in a double deletion with upsE (an ATPase implicated in mating).</text>
</comment>
<comment type="miscellaneous">
    <text evidence="7">Uptake of species-specific DNA by Sulfolobus and subsequent homologous recombination are thought to be involved in DNA repair; the ups pili (encoded upstream of this gene) are probably responsible for species specificity.</text>
</comment>
<comment type="similarity">
    <text evidence="7">Belongs to the Lhr helicase family. Lhr-Core subfamily.</text>
</comment>
<proteinExistence type="evidence at protein level"/>
<name>LHRC_SULAC</name>
<dbReference type="EC" id="5.6.2.4" evidence="5"/>
<dbReference type="EMBL" id="CP000077">
    <property type="protein sequence ID" value="AAY80821.1"/>
    <property type="molecule type" value="Genomic_DNA"/>
</dbReference>
<dbReference type="RefSeq" id="WP_011278323.1">
    <property type="nucleotide sequence ID" value="NC_007181.1"/>
</dbReference>
<dbReference type="STRING" id="330779.Saci_1500"/>
<dbReference type="GeneID" id="14551998"/>
<dbReference type="KEGG" id="sai:Saci_1500"/>
<dbReference type="PATRIC" id="fig|330779.12.peg.1446"/>
<dbReference type="eggNOG" id="arCOG00557">
    <property type="taxonomic scope" value="Archaea"/>
</dbReference>
<dbReference type="HOGENOM" id="CLU_002025_0_0_2"/>
<dbReference type="Proteomes" id="UP000001018">
    <property type="component" value="Chromosome"/>
</dbReference>
<dbReference type="GO" id="GO:0005524">
    <property type="term" value="F:ATP binding"/>
    <property type="evidence" value="ECO:0007669"/>
    <property type="project" value="UniProtKB-KW"/>
</dbReference>
<dbReference type="GO" id="GO:0016887">
    <property type="term" value="F:ATP hydrolysis activity"/>
    <property type="evidence" value="ECO:0007669"/>
    <property type="project" value="TreeGrafter"/>
</dbReference>
<dbReference type="GO" id="GO:0140097">
    <property type="term" value="F:catalytic activity, acting on DNA"/>
    <property type="evidence" value="ECO:0007669"/>
    <property type="project" value="UniProtKB-ARBA"/>
</dbReference>
<dbReference type="GO" id="GO:0003677">
    <property type="term" value="F:DNA binding"/>
    <property type="evidence" value="ECO:0007669"/>
    <property type="project" value="TreeGrafter"/>
</dbReference>
<dbReference type="GO" id="GO:0004386">
    <property type="term" value="F:helicase activity"/>
    <property type="evidence" value="ECO:0007669"/>
    <property type="project" value="UniProtKB-KW"/>
</dbReference>
<dbReference type="CDD" id="cd17922">
    <property type="entry name" value="DEXHc_LHR-like"/>
    <property type="match status" value="1"/>
</dbReference>
<dbReference type="CDD" id="cd18796">
    <property type="entry name" value="SF2_C_LHR"/>
    <property type="match status" value="1"/>
</dbReference>
<dbReference type="Gene3D" id="3.40.50.300">
    <property type="entry name" value="P-loop containing nucleotide triphosphate hydrolases"/>
    <property type="match status" value="2"/>
</dbReference>
<dbReference type="InterPro" id="IPR052511">
    <property type="entry name" value="ATP-dep_Helicase"/>
</dbReference>
<dbReference type="InterPro" id="IPR013701">
    <property type="entry name" value="DEAD/DEAH_assoc"/>
</dbReference>
<dbReference type="InterPro" id="IPR011545">
    <property type="entry name" value="DEAD/DEAH_box_helicase_dom"/>
</dbReference>
<dbReference type="InterPro" id="IPR014001">
    <property type="entry name" value="Helicase_ATP-bd"/>
</dbReference>
<dbReference type="InterPro" id="IPR001650">
    <property type="entry name" value="Helicase_C-like"/>
</dbReference>
<dbReference type="InterPro" id="IPR017170">
    <property type="entry name" value="Lhr-like_ATP-dep_RNA_helic_prd"/>
</dbReference>
<dbReference type="InterPro" id="IPR045628">
    <property type="entry name" value="Lhr_WH_dom"/>
</dbReference>
<dbReference type="InterPro" id="IPR027417">
    <property type="entry name" value="P-loop_NTPase"/>
</dbReference>
<dbReference type="NCBIfam" id="NF010338">
    <property type="entry name" value="PRK13767.1"/>
    <property type="match status" value="1"/>
</dbReference>
<dbReference type="PANTHER" id="PTHR47962">
    <property type="entry name" value="ATP-DEPENDENT HELICASE LHR-RELATED-RELATED"/>
    <property type="match status" value="1"/>
</dbReference>
<dbReference type="PANTHER" id="PTHR47962:SF6">
    <property type="entry name" value="LARGE HELICASE-RELATED PROTEIN"/>
    <property type="match status" value="1"/>
</dbReference>
<dbReference type="Pfam" id="PF00270">
    <property type="entry name" value="DEAD"/>
    <property type="match status" value="1"/>
</dbReference>
<dbReference type="Pfam" id="PF08494">
    <property type="entry name" value="DEAD_assoc"/>
    <property type="match status" value="1"/>
</dbReference>
<dbReference type="Pfam" id="PF00271">
    <property type="entry name" value="Helicase_C"/>
    <property type="match status" value="1"/>
</dbReference>
<dbReference type="Pfam" id="PF19306">
    <property type="entry name" value="WH_Lhr"/>
    <property type="match status" value="1"/>
</dbReference>
<dbReference type="PIRSF" id="PIRSF037307">
    <property type="entry name" value="Lhr-like_helic_prd"/>
    <property type="match status" value="1"/>
</dbReference>
<dbReference type="SMART" id="SM00487">
    <property type="entry name" value="DEXDc"/>
    <property type="match status" value="1"/>
</dbReference>
<dbReference type="SMART" id="SM00490">
    <property type="entry name" value="HELICc"/>
    <property type="match status" value="1"/>
</dbReference>
<dbReference type="SUPFAM" id="SSF52540">
    <property type="entry name" value="P-loop containing nucleoside triphosphate hydrolases"/>
    <property type="match status" value="1"/>
</dbReference>
<dbReference type="PROSITE" id="PS51192">
    <property type="entry name" value="HELICASE_ATP_BIND_1"/>
    <property type="match status" value="1"/>
</dbReference>
<dbReference type="PROSITE" id="PS51194">
    <property type="entry name" value="HELICASE_CTER"/>
    <property type="match status" value="1"/>
</dbReference>
<reference evidence="9" key="1">
    <citation type="journal article" date="2005" name="J. Bacteriol.">
        <title>The genome of Sulfolobus acidocaldarius, a model organism of the Crenarchaeota.</title>
        <authorList>
            <person name="Chen L."/>
            <person name="Bruegger K."/>
            <person name="Skovgaard M."/>
            <person name="Redder P."/>
            <person name="She Q."/>
            <person name="Torarinsson E."/>
            <person name="Greve B."/>
            <person name="Awayez M."/>
            <person name="Zibat A."/>
            <person name="Klenk H.-P."/>
            <person name="Garrett R.A."/>
        </authorList>
    </citation>
    <scope>NUCLEOTIDE SEQUENCE [LARGE SCALE GENOMIC DNA]</scope>
    <source>
        <strain>ATCC 33909 / DSM 639 / JCM 8929 / NBRC 15157 / NCIMB 11770</strain>
    </source>
</reference>
<reference key="2">
    <citation type="journal article" date="2015" name="J. Bacteriol.">
        <title>DNA Processing Proteins Involved in the UV-Induced Stress Response of Sulfolobales.</title>
        <authorList>
            <person name="van Wolferen M."/>
            <person name="Ma X."/>
            <person name="Albers S.V."/>
        </authorList>
    </citation>
    <scope>FUNCTION AS A HELICASE</scope>
    <scope>CATALYTIC ACTIVITY</scope>
    <scope>DISRUPTION PHENOTYPE</scope>
    <scope>DNA-BINDING</scope>
    <scope>MUTAGENESIS OF LYS-60</scope>
    <source>
        <strain>ATCC 33909 / DSM 639 / JCM 8929 / NBRC 15157 / NCIMB 11770</strain>
    </source>
</reference>